<protein>
    <recommendedName>
        <fullName evidence="2">Small ribosomal subunit protein uS12</fullName>
    </recommendedName>
    <alternativeName>
        <fullName evidence="3">30S ribosomal protein S12</fullName>
    </alternativeName>
</protein>
<accession>B2VK38</accession>
<keyword id="KW-0488">Methylation</keyword>
<keyword id="KW-1185">Reference proteome</keyword>
<keyword id="KW-0687">Ribonucleoprotein</keyword>
<keyword id="KW-0689">Ribosomal protein</keyword>
<keyword id="KW-0694">RNA-binding</keyword>
<keyword id="KW-0699">rRNA-binding</keyword>
<keyword id="KW-0820">tRNA-binding</keyword>
<feature type="chain" id="PRO_1000194160" description="Small ribosomal subunit protein uS12">
    <location>
        <begin position="1"/>
        <end position="124"/>
    </location>
</feature>
<feature type="modified residue" description="3-methylthioaspartic acid" evidence="1">
    <location>
        <position position="89"/>
    </location>
</feature>
<evidence type="ECO:0000250" key="1"/>
<evidence type="ECO:0000255" key="2">
    <source>
        <dbReference type="HAMAP-Rule" id="MF_00403"/>
    </source>
</evidence>
<evidence type="ECO:0000305" key="3"/>
<reference key="1">
    <citation type="journal article" date="2008" name="Environ. Microbiol.">
        <title>The genome of Erwinia tasmaniensis strain Et1/99, a non-pathogenic bacterium in the genus Erwinia.</title>
        <authorList>
            <person name="Kube M."/>
            <person name="Migdoll A.M."/>
            <person name="Mueller I."/>
            <person name="Kuhl H."/>
            <person name="Beck A."/>
            <person name="Reinhardt R."/>
            <person name="Geider K."/>
        </authorList>
    </citation>
    <scope>NUCLEOTIDE SEQUENCE [LARGE SCALE GENOMIC DNA]</scope>
    <source>
        <strain>DSM 17950 / CFBP 7177 / CIP 109463 / NCPPB 4357 / Et1/99</strain>
    </source>
</reference>
<proteinExistence type="inferred from homology"/>
<name>RS12_ERWT9</name>
<gene>
    <name evidence="2" type="primary">rpsL</name>
    <name type="ordered locus">ETA_31690</name>
</gene>
<sequence>MATVNQLVRKPRVRKVAKSNVPALEACPQKRGVCTRVYTTTPKKPNSALRKVCRVRLTNGFEVTSYIGGEGHNLQEHSVILIRGGRVKDLPGVRYHTVRGALDCSGVKDRKQARSKYGVKKPKA</sequence>
<organism>
    <name type="scientific">Erwinia tasmaniensis (strain DSM 17950 / CFBP 7177 / CIP 109463 / NCPPB 4357 / Et1/99)</name>
    <dbReference type="NCBI Taxonomy" id="465817"/>
    <lineage>
        <taxon>Bacteria</taxon>
        <taxon>Pseudomonadati</taxon>
        <taxon>Pseudomonadota</taxon>
        <taxon>Gammaproteobacteria</taxon>
        <taxon>Enterobacterales</taxon>
        <taxon>Erwiniaceae</taxon>
        <taxon>Erwinia</taxon>
    </lineage>
</organism>
<comment type="function">
    <text evidence="2">With S4 and S5 plays an important role in translational accuracy.</text>
</comment>
<comment type="function">
    <text evidence="2">Interacts with and stabilizes bases of the 16S rRNA that are involved in tRNA selection in the A site and with the mRNA backbone. Located at the interface of the 30S and 50S subunits, it traverses the body of the 30S subunit contacting proteins on the other side and probably holding the rRNA structure together. The combined cluster of proteins S8, S12 and S17 appears to hold together the shoulder and platform of the 30S subunit.</text>
</comment>
<comment type="subunit">
    <text evidence="2">Part of the 30S ribosomal subunit. Contacts proteins S8 and S17. May interact with IF1 in the 30S initiation complex.</text>
</comment>
<comment type="similarity">
    <text evidence="2">Belongs to the universal ribosomal protein uS12 family.</text>
</comment>
<dbReference type="EMBL" id="CU468135">
    <property type="protein sequence ID" value="CAO98215.1"/>
    <property type="molecule type" value="Genomic_DNA"/>
</dbReference>
<dbReference type="RefSeq" id="WP_003852912.1">
    <property type="nucleotide sequence ID" value="NC_010694.1"/>
</dbReference>
<dbReference type="SMR" id="B2VK38"/>
<dbReference type="STRING" id="465817.ETA_31690"/>
<dbReference type="GeneID" id="93531687"/>
<dbReference type="KEGG" id="eta:ETA_31690"/>
<dbReference type="eggNOG" id="COG0048">
    <property type="taxonomic scope" value="Bacteria"/>
</dbReference>
<dbReference type="HOGENOM" id="CLU_104295_1_2_6"/>
<dbReference type="OrthoDB" id="9802366at2"/>
<dbReference type="Proteomes" id="UP000001726">
    <property type="component" value="Chromosome"/>
</dbReference>
<dbReference type="GO" id="GO:0015935">
    <property type="term" value="C:small ribosomal subunit"/>
    <property type="evidence" value="ECO:0007669"/>
    <property type="project" value="InterPro"/>
</dbReference>
<dbReference type="GO" id="GO:0019843">
    <property type="term" value="F:rRNA binding"/>
    <property type="evidence" value="ECO:0007669"/>
    <property type="project" value="UniProtKB-UniRule"/>
</dbReference>
<dbReference type="GO" id="GO:0003735">
    <property type="term" value="F:structural constituent of ribosome"/>
    <property type="evidence" value="ECO:0007669"/>
    <property type="project" value="InterPro"/>
</dbReference>
<dbReference type="GO" id="GO:0000049">
    <property type="term" value="F:tRNA binding"/>
    <property type="evidence" value="ECO:0007669"/>
    <property type="project" value="UniProtKB-UniRule"/>
</dbReference>
<dbReference type="GO" id="GO:0006412">
    <property type="term" value="P:translation"/>
    <property type="evidence" value="ECO:0007669"/>
    <property type="project" value="UniProtKB-UniRule"/>
</dbReference>
<dbReference type="CDD" id="cd03368">
    <property type="entry name" value="Ribosomal_S12"/>
    <property type="match status" value="1"/>
</dbReference>
<dbReference type="FunFam" id="2.40.50.140:FF:000001">
    <property type="entry name" value="30S ribosomal protein S12"/>
    <property type="match status" value="1"/>
</dbReference>
<dbReference type="Gene3D" id="2.40.50.140">
    <property type="entry name" value="Nucleic acid-binding proteins"/>
    <property type="match status" value="1"/>
</dbReference>
<dbReference type="HAMAP" id="MF_00403_B">
    <property type="entry name" value="Ribosomal_uS12_B"/>
    <property type="match status" value="1"/>
</dbReference>
<dbReference type="InterPro" id="IPR012340">
    <property type="entry name" value="NA-bd_OB-fold"/>
</dbReference>
<dbReference type="InterPro" id="IPR006032">
    <property type="entry name" value="Ribosomal_uS12"/>
</dbReference>
<dbReference type="InterPro" id="IPR005679">
    <property type="entry name" value="Ribosomal_uS12_bac"/>
</dbReference>
<dbReference type="NCBIfam" id="TIGR00981">
    <property type="entry name" value="rpsL_bact"/>
    <property type="match status" value="1"/>
</dbReference>
<dbReference type="PANTHER" id="PTHR11652">
    <property type="entry name" value="30S RIBOSOMAL PROTEIN S12 FAMILY MEMBER"/>
    <property type="match status" value="1"/>
</dbReference>
<dbReference type="Pfam" id="PF00164">
    <property type="entry name" value="Ribosom_S12_S23"/>
    <property type="match status" value="1"/>
</dbReference>
<dbReference type="PIRSF" id="PIRSF002133">
    <property type="entry name" value="Ribosomal_S12/S23"/>
    <property type="match status" value="1"/>
</dbReference>
<dbReference type="PRINTS" id="PR01034">
    <property type="entry name" value="RIBOSOMALS12"/>
</dbReference>
<dbReference type="SUPFAM" id="SSF50249">
    <property type="entry name" value="Nucleic acid-binding proteins"/>
    <property type="match status" value="1"/>
</dbReference>
<dbReference type="PROSITE" id="PS00055">
    <property type="entry name" value="RIBOSOMAL_S12"/>
    <property type="match status" value="1"/>
</dbReference>